<gene>
    <name type="primary">pyrD</name>
    <name type="ordered locus">Exig_1941</name>
</gene>
<comment type="function">
    <text evidence="1">Catalyzes the conversion of dihydroorotate to orotate with NAD(+) as electron acceptor.</text>
</comment>
<comment type="catalytic activity">
    <reaction>
        <text>(S)-dihydroorotate + NAD(+) = orotate + NADH + H(+)</text>
        <dbReference type="Rhea" id="RHEA:13513"/>
        <dbReference type="ChEBI" id="CHEBI:15378"/>
        <dbReference type="ChEBI" id="CHEBI:30839"/>
        <dbReference type="ChEBI" id="CHEBI:30864"/>
        <dbReference type="ChEBI" id="CHEBI:57540"/>
        <dbReference type="ChEBI" id="CHEBI:57945"/>
        <dbReference type="EC" id="1.3.1.14"/>
    </reaction>
</comment>
<comment type="cofactor">
    <cofactor evidence="1">
        <name>FMN</name>
        <dbReference type="ChEBI" id="CHEBI:58210"/>
    </cofactor>
    <text evidence="1">Binds 1 FMN per subunit.</text>
</comment>
<comment type="pathway">
    <text>Pyrimidine metabolism; UMP biosynthesis via de novo pathway; orotate from (S)-dihydroorotate (NAD(+) route): step 1/1.</text>
</comment>
<comment type="subunit">
    <text evidence="1">Heterotetramer of 2 PyrK and 2 PyrD type B subunits.</text>
</comment>
<comment type="subcellular location">
    <subcellularLocation>
        <location evidence="1">Cytoplasm</location>
    </subcellularLocation>
</comment>
<comment type="similarity">
    <text evidence="2">Belongs to the dihydroorotate dehydrogenase family. Type 1 subfamily.</text>
</comment>
<organism>
    <name type="scientific">Exiguobacterium sibiricum (strain DSM 17290 / CCUG 55495 / CIP 109462 / JCM 13490 / 255-15)</name>
    <dbReference type="NCBI Taxonomy" id="262543"/>
    <lineage>
        <taxon>Bacteria</taxon>
        <taxon>Bacillati</taxon>
        <taxon>Bacillota</taxon>
        <taxon>Bacilli</taxon>
        <taxon>Bacillales</taxon>
        <taxon>Bacillales Family XII. Incertae Sedis</taxon>
        <taxon>Exiguobacterium</taxon>
    </lineage>
</organism>
<protein>
    <recommendedName>
        <fullName>Dihydroorotate dehydrogenase B (NAD(+)), catalytic subunit</fullName>
        <shortName>DHOD B</shortName>
        <shortName>DHODase B</shortName>
        <shortName>DHOdehase B</shortName>
        <ecNumber>1.3.1.14</ecNumber>
    </recommendedName>
    <alternativeName>
        <fullName>Dihydroorotate oxidase B</fullName>
    </alternativeName>
    <alternativeName>
        <fullName>Orotate reductase (NADH)</fullName>
    </alternativeName>
</protein>
<feature type="chain" id="PRO_1000204305" description="Dihydroorotate dehydrogenase B (NAD(+)), catalytic subunit">
    <location>
        <begin position="1"/>
        <end position="309"/>
    </location>
</feature>
<feature type="active site" description="Nucleophile">
    <location>
        <position position="130"/>
    </location>
</feature>
<feature type="binding site" evidence="1">
    <location>
        <position position="21"/>
    </location>
    <ligand>
        <name>FMN</name>
        <dbReference type="ChEBI" id="CHEBI:58210"/>
    </ligand>
</feature>
<feature type="binding site" evidence="1">
    <location>
        <begin position="45"/>
        <end position="46"/>
    </location>
    <ligand>
        <name>FMN</name>
        <dbReference type="ChEBI" id="CHEBI:58210"/>
    </ligand>
</feature>
<feature type="binding site" evidence="1">
    <location>
        <position position="45"/>
    </location>
    <ligand>
        <name>substrate</name>
    </ligand>
</feature>
<feature type="binding site" evidence="1">
    <location>
        <begin position="69"/>
        <end position="73"/>
    </location>
    <ligand>
        <name>substrate</name>
    </ligand>
</feature>
<feature type="binding site" evidence="1">
    <location>
        <position position="99"/>
    </location>
    <ligand>
        <name>FMN</name>
        <dbReference type="ChEBI" id="CHEBI:58210"/>
    </ligand>
</feature>
<feature type="binding site" evidence="1">
    <location>
        <position position="127"/>
    </location>
    <ligand>
        <name>FMN</name>
        <dbReference type="ChEBI" id="CHEBI:58210"/>
    </ligand>
</feature>
<feature type="binding site" evidence="1">
    <location>
        <position position="127"/>
    </location>
    <ligand>
        <name>substrate</name>
    </ligand>
</feature>
<feature type="binding site" evidence="1">
    <location>
        <position position="165"/>
    </location>
    <ligand>
        <name>FMN</name>
        <dbReference type="ChEBI" id="CHEBI:58210"/>
    </ligand>
</feature>
<feature type="binding site" evidence="1">
    <location>
        <position position="191"/>
    </location>
    <ligand>
        <name>FMN</name>
        <dbReference type="ChEBI" id="CHEBI:58210"/>
    </ligand>
</feature>
<feature type="binding site" evidence="1">
    <location>
        <begin position="192"/>
        <end position="193"/>
    </location>
    <ligand>
        <name>substrate</name>
    </ligand>
</feature>
<feature type="binding site" evidence="1">
    <location>
        <position position="217"/>
    </location>
    <ligand>
        <name>FMN</name>
        <dbReference type="ChEBI" id="CHEBI:58210"/>
    </ligand>
</feature>
<feature type="binding site" evidence="1">
    <location>
        <begin position="243"/>
        <end position="244"/>
    </location>
    <ligand>
        <name>FMN</name>
        <dbReference type="ChEBI" id="CHEBI:58210"/>
    </ligand>
</feature>
<feature type="binding site" evidence="1">
    <location>
        <begin position="265"/>
        <end position="266"/>
    </location>
    <ligand>
        <name>FMN</name>
        <dbReference type="ChEBI" id="CHEBI:58210"/>
    </ligand>
</feature>
<accession>B1YIR7</accession>
<reference key="1">
    <citation type="submission" date="2008-04" db="EMBL/GenBank/DDBJ databases">
        <title>Complete sequence of chromosome of Exiguobacterium sibiricum 255-15.</title>
        <authorList>
            <consortium name="US DOE Joint Genome Institute"/>
            <person name="Copeland A."/>
            <person name="Lucas S."/>
            <person name="Lapidus A."/>
            <person name="Glavina del Rio T."/>
            <person name="Dalin E."/>
            <person name="Tice H."/>
            <person name="Bruce D."/>
            <person name="Goodwin L."/>
            <person name="Pitluck S."/>
            <person name="Kiss H."/>
            <person name="Chertkov O."/>
            <person name="Monk C."/>
            <person name="Brettin T."/>
            <person name="Detter J.C."/>
            <person name="Han C."/>
            <person name="Kuske C.R."/>
            <person name="Schmutz J."/>
            <person name="Larimer F."/>
            <person name="Land M."/>
            <person name="Hauser L."/>
            <person name="Kyrpides N."/>
            <person name="Mikhailova N."/>
            <person name="Vishnivetskaya T."/>
            <person name="Rodrigues D.F."/>
            <person name="Gilichinsky D."/>
            <person name="Tiedje J."/>
            <person name="Richardson P."/>
        </authorList>
    </citation>
    <scope>NUCLEOTIDE SEQUENCE [LARGE SCALE GENOMIC DNA]</scope>
    <source>
        <strain>DSM 17290 / CCUG 55495 / CIP 109462 / JCM 13490 / 255-15</strain>
    </source>
</reference>
<name>PYRDB_EXIS2</name>
<evidence type="ECO:0000250" key="1"/>
<evidence type="ECO:0000305" key="2"/>
<keyword id="KW-0963">Cytoplasm</keyword>
<keyword id="KW-0285">Flavoprotein</keyword>
<keyword id="KW-0288">FMN</keyword>
<keyword id="KW-0520">NAD</keyword>
<keyword id="KW-0560">Oxidoreductase</keyword>
<keyword id="KW-0665">Pyrimidine biosynthesis</keyword>
<keyword id="KW-1185">Reference proteome</keyword>
<sequence>MNRLQVVLPGLNLKNPIIPASGCFGFGEEFAKLYDLSVLGGIMIKAATGEERYGNPTPRVAESGMGMLNAIGLQNPGVEGIIAQKLPFLRQFDTEIIANVAGSTPEEYEDVTRRISRDPVVKAIELNISCPNVKSGGLQFGTDPQMAAELTRRVKAVSEKPVYVKLSPNVTSIVEMAQAVEQAGADGLTMINTLVGMRIDVRTGQPILANRIGGLSGPAIKPVAVRMIHDVAQVVTIPIIGMGGVMEVDDVLEMIYAGASAVAIGTANFVNPFICQELITDLPKRMDELGIEHIMDIRGKAYGATLHRA</sequence>
<proteinExistence type="inferred from homology"/>
<dbReference type="EC" id="1.3.1.14"/>
<dbReference type="EMBL" id="CP001022">
    <property type="protein sequence ID" value="ACB61393.1"/>
    <property type="molecule type" value="Genomic_DNA"/>
</dbReference>
<dbReference type="RefSeq" id="WP_012370811.1">
    <property type="nucleotide sequence ID" value="NC_010556.1"/>
</dbReference>
<dbReference type="SMR" id="B1YIR7"/>
<dbReference type="STRING" id="262543.Exig_1941"/>
<dbReference type="KEGG" id="esi:Exig_1941"/>
<dbReference type="eggNOG" id="COG0167">
    <property type="taxonomic scope" value="Bacteria"/>
</dbReference>
<dbReference type="HOGENOM" id="CLU_042042_0_0_9"/>
<dbReference type="OrthoDB" id="9794954at2"/>
<dbReference type="UniPathway" id="UPA00070">
    <property type="reaction ID" value="UER00945"/>
</dbReference>
<dbReference type="Proteomes" id="UP000001681">
    <property type="component" value="Chromosome"/>
</dbReference>
<dbReference type="GO" id="GO:0005737">
    <property type="term" value="C:cytoplasm"/>
    <property type="evidence" value="ECO:0007669"/>
    <property type="project" value="UniProtKB-SubCell"/>
</dbReference>
<dbReference type="GO" id="GO:0004589">
    <property type="term" value="F:dihydroorotate dehydrogenase (NAD+) activity"/>
    <property type="evidence" value="ECO:0007669"/>
    <property type="project" value="UniProtKB-EC"/>
</dbReference>
<dbReference type="GO" id="GO:0006207">
    <property type="term" value="P:'de novo' pyrimidine nucleobase biosynthetic process"/>
    <property type="evidence" value="ECO:0007669"/>
    <property type="project" value="InterPro"/>
</dbReference>
<dbReference type="GO" id="GO:0044205">
    <property type="term" value="P:'de novo' UMP biosynthetic process"/>
    <property type="evidence" value="ECO:0007669"/>
    <property type="project" value="UniProtKB-UniRule"/>
</dbReference>
<dbReference type="CDD" id="cd04740">
    <property type="entry name" value="DHOD_1B_like"/>
    <property type="match status" value="1"/>
</dbReference>
<dbReference type="FunFam" id="3.20.20.70:FF:000069">
    <property type="entry name" value="Dihydroorotate dehydrogenase"/>
    <property type="match status" value="1"/>
</dbReference>
<dbReference type="Gene3D" id="3.20.20.70">
    <property type="entry name" value="Aldolase class I"/>
    <property type="match status" value="1"/>
</dbReference>
<dbReference type="HAMAP" id="MF_00224">
    <property type="entry name" value="DHO_dh_type1"/>
    <property type="match status" value="1"/>
</dbReference>
<dbReference type="InterPro" id="IPR013785">
    <property type="entry name" value="Aldolase_TIM"/>
</dbReference>
<dbReference type="InterPro" id="IPR050074">
    <property type="entry name" value="DHO_dehydrogenase"/>
</dbReference>
<dbReference type="InterPro" id="IPR033888">
    <property type="entry name" value="DHOD_1B"/>
</dbReference>
<dbReference type="InterPro" id="IPR024920">
    <property type="entry name" value="Dihydroorotate_DH_1"/>
</dbReference>
<dbReference type="InterPro" id="IPR012135">
    <property type="entry name" value="Dihydroorotate_DH_1_2"/>
</dbReference>
<dbReference type="InterPro" id="IPR005720">
    <property type="entry name" value="Dihydroorotate_DH_cat"/>
</dbReference>
<dbReference type="InterPro" id="IPR001295">
    <property type="entry name" value="Dihydroorotate_DH_CS"/>
</dbReference>
<dbReference type="InterPro" id="IPR049622">
    <property type="entry name" value="Dihydroorotate_DH_I"/>
</dbReference>
<dbReference type="NCBIfam" id="NF005574">
    <property type="entry name" value="PRK07259.1"/>
    <property type="match status" value="1"/>
</dbReference>
<dbReference type="NCBIfam" id="TIGR01037">
    <property type="entry name" value="pyrD_sub1_fam"/>
    <property type="match status" value="1"/>
</dbReference>
<dbReference type="PANTHER" id="PTHR48109:SF1">
    <property type="entry name" value="DIHYDROOROTATE DEHYDROGENASE (FUMARATE)"/>
    <property type="match status" value="1"/>
</dbReference>
<dbReference type="PANTHER" id="PTHR48109">
    <property type="entry name" value="DIHYDROOROTATE DEHYDROGENASE (QUINONE), MITOCHONDRIAL-RELATED"/>
    <property type="match status" value="1"/>
</dbReference>
<dbReference type="Pfam" id="PF01180">
    <property type="entry name" value="DHO_dh"/>
    <property type="match status" value="1"/>
</dbReference>
<dbReference type="PIRSF" id="PIRSF000164">
    <property type="entry name" value="DHO_oxidase"/>
    <property type="match status" value="1"/>
</dbReference>
<dbReference type="SUPFAM" id="SSF51395">
    <property type="entry name" value="FMN-linked oxidoreductases"/>
    <property type="match status" value="1"/>
</dbReference>
<dbReference type="PROSITE" id="PS00911">
    <property type="entry name" value="DHODEHASE_1"/>
    <property type="match status" value="1"/>
</dbReference>